<protein>
    <recommendedName>
        <fullName>Profilin-2</fullName>
    </recommendedName>
    <alternativeName>
        <fullName>Profilin II</fullName>
    </alternativeName>
</protein>
<gene>
    <name type="primary">proB</name>
    <name type="ORF">DDB_G0286187</name>
</gene>
<keyword id="KW-0009">Actin-binding</keyword>
<keyword id="KW-0963">Cytoplasm</keyword>
<keyword id="KW-0206">Cytoskeleton</keyword>
<keyword id="KW-1185">Reference proteome</keyword>
<name>PROF2_DICDI</name>
<accession>P26200</accession>
<accession>Q54M07</accession>
<evidence type="ECO:0000269" key="1">
    <source>
    </source>
</evidence>
<evidence type="ECO:0000305" key="2"/>
<reference key="1">
    <citation type="journal article" date="1991" name="J. Cell Sci.">
        <title>Dictyostelium discoideum contains two profilin isoforms that differ in structure and function.</title>
        <authorList>
            <person name="Haugwitz M."/>
            <person name="Noegel A.A."/>
            <person name="Rieger D."/>
            <person name="Lottspeich F."/>
            <person name="Schleicher M."/>
        </authorList>
    </citation>
    <scope>NUCLEOTIDE SEQUENCE [MRNA]</scope>
    <source>
        <strain>AX2</strain>
    </source>
</reference>
<reference key="2">
    <citation type="journal article" date="2005" name="Nature">
        <title>The genome of the social amoeba Dictyostelium discoideum.</title>
        <authorList>
            <person name="Eichinger L."/>
            <person name="Pachebat J.A."/>
            <person name="Gloeckner G."/>
            <person name="Rajandream M.A."/>
            <person name="Sucgang R."/>
            <person name="Berriman M."/>
            <person name="Song J."/>
            <person name="Olsen R."/>
            <person name="Szafranski K."/>
            <person name="Xu Q."/>
            <person name="Tunggal B."/>
            <person name="Kummerfeld S."/>
            <person name="Madera M."/>
            <person name="Konfortov B.A."/>
            <person name="Rivero F."/>
            <person name="Bankier A.T."/>
            <person name="Lehmann R."/>
            <person name="Hamlin N."/>
            <person name="Davies R."/>
            <person name="Gaudet P."/>
            <person name="Fey P."/>
            <person name="Pilcher K."/>
            <person name="Chen G."/>
            <person name="Saunders D."/>
            <person name="Sodergren E.J."/>
            <person name="Davis P."/>
            <person name="Kerhornou A."/>
            <person name="Nie X."/>
            <person name="Hall N."/>
            <person name="Anjard C."/>
            <person name="Hemphill L."/>
            <person name="Bason N."/>
            <person name="Farbrother P."/>
            <person name="Desany B."/>
            <person name="Just E."/>
            <person name="Morio T."/>
            <person name="Rost R."/>
            <person name="Churcher C.M."/>
            <person name="Cooper J."/>
            <person name="Haydock S."/>
            <person name="van Driessche N."/>
            <person name="Cronin A."/>
            <person name="Goodhead I."/>
            <person name="Muzny D.M."/>
            <person name="Mourier T."/>
            <person name="Pain A."/>
            <person name="Lu M."/>
            <person name="Harper D."/>
            <person name="Lindsay R."/>
            <person name="Hauser H."/>
            <person name="James K.D."/>
            <person name="Quiles M."/>
            <person name="Madan Babu M."/>
            <person name="Saito T."/>
            <person name="Buchrieser C."/>
            <person name="Wardroper A."/>
            <person name="Felder M."/>
            <person name="Thangavelu M."/>
            <person name="Johnson D."/>
            <person name="Knights A."/>
            <person name="Loulseged H."/>
            <person name="Mungall K.L."/>
            <person name="Oliver K."/>
            <person name="Price C."/>
            <person name="Quail M.A."/>
            <person name="Urushihara H."/>
            <person name="Hernandez J."/>
            <person name="Rabbinowitsch E."/>
            <person name="Steffen D."/>
            <person name="Sanders M."/>
            <person name="Ma J."/>
            <person name="Kohara Y."/>
            <person name="Sharp S."/>
            <person name="Simmonds M.N."/>
            <person name="Spiegler S."/>
            <person name="Tivey A."/>
            <person name="Sugano S."/>
            <person name="White B."/>
            <person name="Walker D."/>
            <person name="Woodward J.R."/>
            <person name="Winckler T."/>
            <person name="Tanaka Y."/>
            <person name="Shaulsky G."/>
            <person name="Schleicher M."/>
            <person name="Weinstock G.M."/>
            <person name="Rosenthal A."/>
            <person name="Cox E.C."/>
            <person name="Chisholm R.L."/>
            <person name="Gibbs R.A."/>
            <person name="Loomis W.F."/>
            <person name="Platzer M."/>
            <person name="Kay R.R."/>
            <person name="Williams J.G."/>
            <person name="Dear P.H."/>
            <person name="Noegel A.A."/>
            <person name="Barrell B.G."/>
            <person name="Kuspa A."/>
        </authorList>
    </citation>
    <scope>NUCLEOTIDE SEQUENCE [LARGE SCALE GENOMIC DNA]</scope>
    <source>
        <strain>AX4</strain>
    </source>
</reference>
<reference key="3">
    <citation type="journal article" date="2005" name="Nat. Cell Biol.">
        <title>The Diaphanous-related formin dDia2 is required for the formation and maintenance of filopodia.</title>
        <authorList>
            <person name="Schirenbeck A."/>
            <person name="Bretschneider T."/>
            <person name="Arasada R."/>
            <person name="Schleicher M."/>
            <person name="Faix J."/>
        </authorList>
    </citation>
    <scope>INTERACTION WITH FORH</scope>
    <source>
        <strain>AX2</strain>
    </source>
</reference>
<feature type="chain" id="PRO_0000199595" description="Profilin-2">
    <location>
        <begin position="1"/>
        <end position="124"/>
    </location>
</feature>
<comment type="function">
    <text>Binds to actin and affects the structure of the cytoskeleton. At high concentrations, profilin prevents the polymerization of actin, whereas it enhances it at low concentrations. By binding to PIP2, it inhibits the formation of IP3 and DG.</text>
</comment>
<comment type="subunit">
    <text evidence="1">Occurs in many kinds of cells as a complex with monomeric actin in a 1:1 ratio. Interacts with forH.</text>
</comment>
<comment type="subcellular location">
    <subcellularLocation>
        <location>Cytoplasm</location>
        <location>Cytoskeleton</location>
    </subcellularLocation>
</comment>
<comment type="similarity">
    <text evidence="2">Belongs to the profilin family.</text>
</comment>
<proteinExistence type="evidence at protein level"/>
<dbReference type="EMBL" id="X61580">
    <property type="protein sequence ID" value="CAA43780.1"/>
    <property type="molecule type" value="mRNA"/>
</dbReference>
<dbReference type="EMBL" id="AAFI02000085">
    <property type="protein sequence ID" value="EAL64269.1"/>
    <property type="molecule type" value="Genomic_DNA"/>
</dbReference>
<dbReference type="PIR" id="B53255">
    <property type="entry name" value="FADO2"/>
</dbReference>
<dbReference type="RefSeq" id="XP_637824.1">
    <property type="nucleotide sequence ID" value="XM_632732.1"/>
</dbReference>
<dbReference type="SMR" id="P26200"/>
<dbReference type="FunCoup" id="P26200">
    <property type="interactions" value="85"/>
</dbReference>
<dbReference type="IntAct" id="P26200">
    <property type="interactions" value="1"/>
</dbReference>
<dbReference type="STRING" id="44689.P26200"/>
<dbReference type="PaxDb" id="44689-DDB0191249"/>
<dbReference type="EnsemblProtists" id="EAL64269">
    <property type="protein sequence ID" value="EAL64269"/>
    <property type="gene ID" value="DDB_G0286187"/>
</dbReference>
<dbReference type="GeneID" id="8625538"/>
<dbReference type="KEGG" id="ddi:DDB_G0286187"/>
<dbReference type="dictyBase" id="DDB_G0286187">
    <property type="gene designation" value="proB"/>
</dbReference>
<dbReference type="VEuPathDB" id="AmoebaDB:DDB_G0286187"/>
<dbReference type="eggNOG" id="KOG1755">
    <property type="taxonomic scope" value="Eukaryota"/>
</dbReference>
<dbReference type="HOGENOM" id="CLU_120772_1_1_1"/>
<dbReference type="InParanoid" id="P26200"/>
<dbReference type="OMA" id="GFCYAAI"/>
<dbReference type="PhylomeDB" id="P26200"/>
<dbReference type="PRO" id="PR:P26200"/>
<dbReference type="Proteomes" id="UP000002195">
    <property type="component" value="Chromosome 4"/>
</dbReference>
<dbReference type="GO" id="GO:0015629">
    <property type="term" value="C:actin cytoskeleton"/>
    <property type="evidence" value="ECO:0000304"/>
    <property type="project" value="dictyBase"/>
</dbReference>
<dbReference type="GO" id="GO:0005938">
    <property type="term" value="C:cell cortex"/>
    <property type="evidence" value="ECO:0000318"/>
    <property type="project" value="GO_Central"/>
</dbReference>
<dbReference type="GO" id="GO:0031012">
    <property type="term" value="C:extracellular matrix"/>
    <property type="evidence" value="ECO:0007005"/>
    <property type="project" value="dictyBase"/>
</dbReference>
<dbReference type="GO" id="GO:0003779">
    <property type="term" value="F:actin binding"/>
    <property type="evidence" value="ECO:0000304"/>
    <property type="project" value="dictyBase"/>
</dbReference>
<dbReference type="GO" id="GO:0003785">
    <property type="term" value="F:actin monomer binding"/>
    <property type="evidence" value="ECO:0000314"/>
    <property type="project" value="dictyBase"/>
</dbReference>
<dbReference type="GO" id="GO:0032037">
    <property type="term" value="F:myosin I heavy chain binding"/>
    <property type="evidence" value="ECO:0000353"/>
    <property type="project" value="dictyBase"/>
</dbReference>
<dbReference type="GO" id="GO:0045010">
    <property type="term" value="P:actin nucleation"/>
    <property type="evidence" value="ECO:0000304"/>
    <property type="project" value="dictyBase"/>
</dbReference>
<dbReference type="GO" id="GO:0048870">
    <property type="term" value="P:cell motility"/>
    <property type="evidence" value="ECO:0000315"/>
    <property type="project" value="dictyBase"/>
</dbReference>
<dbReference type="GO" id="GO:0006887">
    <property type="term" value="P:exocytosis"/>
    <property type="evidence" value="ECO:0000316"/>
    <property type="project" value="dictyBase"/>
</dbReference>
<dbReference type="GO" id="GO:0006972">
    <property type="term" value="P:hyperosmotic response"/>
    <property type="evidence" value="ECO:0000270"/>
    <property type="project" value="dictyBase"/>
</dbReference>
<dbReference type="GO" id="GO:0000281">
    <property type="term" value="P:mitotic cytokinesis"/>
    <property type="evidence" value="ECO:0000315"/>
    <property type="project" value="dictyBase"/>
</dbReference>
<dbReference type="GO" id="GO:0030837">
    <property type="term" value="P:negative regulation of actin filament polymerization"/>
    <property type="evidence" value="ECO:0000314"/>
    <property type="project" value="dictyBase"/>
</dbReference>
<dbReference type="GO" id="GO:0050765">
    <property type="term" value="P:negative regulation of phagocytosis"/>
    <property type="evidence" value="ECO:0000316"/>
    <property type="project" value="dictyBase"/>
</dbReference>
<dbReference type="GO" id="GO:0006907">
    <property type="term" value="P:pinocytosis"/>
    <property type="evidence" value="ECO:0000316"/>
    <property type="project" value="dictyBase"/>
</dbReference>
<dbReference type="GO" id="GO:0030838">
    <property type="term" value="P:positive regulation of actin filament polymerization"/>
    <property type="evidence" value="ECO:0000314"/>
    <property type="project" value="dictyBase"/>
</dbReference>
<dbReference type="GO" id="GO:0033299">
    <property type="term" value="P:secretion of lysosomal enzymes"/>
    <property type="evidence" value="ECO:0000316"/>
    <property type="project" value="dictyBase"/>
</dbReference>
<dbReference type="GO" id="GO:0030587">
    <property type="term" value="P:sorocarp development"/>
    <property type="evidence" value="ECO:0000315"/>
    <property type="project" value="dictyBase"/>
</dbReference>
<dbReference type="CDD" id="cd00148">
    <property type="entry name" value="PROF"/>
    <property type="match status" value="1"/>
</dbReference>
<dbReference type="FunFam" id="3.30.450.30:FF:000001">
    <property type="entry name" value="Profilin"/>
    <property type="match status" value="1"/>
</dbReference>
<dbReference type="Gene3D" id="3.30.450.30">
    <property type="entry name" value="Dynein light chain 2a, cytoplasmic"/>
    <property type="match status" value="1"/>
</dbReference>
<dbReference type="InterPro" id="IPR048278">
    <property type="entry name" value="PFN"/>
</dbReference>
<dbReference type="InterPro" id="IPR005455">
    <property type="entry name" value="PFN_euk"/>
</dbReference>
<dbReference type="InterPro" id="IPR036140">
    <property type="entry name" value="PFN_sf"/>
</dbReference>
<dbReference type="InterPro" id="IPR027310">
    <property type="entry name" value="Profilin_CS"/>
</dbReference>
<dbReference type="PANTHER" id="PTHR11604">
    <property type="entry name" value="PROFILIN"/>
    <property type="match status" value="1"/>
</dbReference>
<dbReference type="PANTHER" id="PTHR11604:SF3">
    <property type="entry name" value="PROFILIN-2"/>
    <property type="match status" value="1"/>
</dbReference>
<dbReference type="Pfam" id="PF00235">
    <property type="entry name" value="Profilin"/>
    <property type="match status" value="1"/>
</dbReference>
<dbReference type="PRINTS" id="PR00392">
    <property type="entry name" value="PROFILIN"/>
</dbReference>
<dbReference type="PRINTS" id="PR01640">
    <property type="entry name" value="PROFILINPLNT"/>
</dbReference>
<dbReference type="SMART" id="SM00392">
    <property type="entry name" value="PROF"/>
    <property type="match status" value="1"/>
</dbReference>
<dbReference type="SUPFAM" id="SSF55770">
    <property type="entry name" value="Profilin (actin-binding protein)"/>
    <property type="match status" value="1"/>
</dbReference>
<dbReference type="PROSITE" id="PS00414">
    <property type="entry name" value="PROFILIN"/>
    <property type="match status" value="1"/>
</dbReference>
<organism>
    <name type="scientific">Dictyostelium discoideum</name>
    <name type="common">Social amoeba</name>
    <dbReference type="NCBI Taxonomy" id="44689"/>
    <lineage>
        <taxon>Eukaryota</taxon>
        <taxon>Amoebozoa</taxon>
        <taxon>Evosea</taxon>
        <taxon>Eumycetozoa</taxon>
        <taxon>Dictyostelia</taxon>
        <taxon>Dictyosteliales</taxon>
        <taxon>Dictyosteliaceae</taxon>
        <taxon>Dictyostelium</taxon>
    </lineage>
</organism>
<sequence length="124" mass="12730">MTWQAYVDNNLLGAGFASAALLGAADGSVWAHSAGFNVAEGKAITALFQKDGAAFATGIHVAGKKYMAIKSDTRSAYGKLGAGGVVCVKTLTCIIVAVYDDKLQPGAAANIAEKLADYLIDNNC</sequence>